<reference key="1">
    <citation type="journal article" date="2006" name="Proc. Natl. Acad. Sci. U.S.A.">
        <title>Genome reduction in Leptospira borgpetersenii reflects limited transmission potential.</title>
        <authorList>
            <person name="Bulach D.M."/>
            <person name="Zuerner R.L."/>
            <person name="Wilson P."/>
            <person name="Seemann T."/>
            <person name="McGrath A."/>
            <person name="Cullen P.A."/>
            <person name="Davis J."/>
            <person name="Johnson M."/>
            <person name="Kuczek E."/>
            <person name="Alt D.P."/>
            <person name="Peterson-Burch B."/>
            <person name="Coppel R.L."/>
            <person name="Rood J.I."/>
            <person name="Davies J.K."/>
            <person name="Adler B."/>
        </authorList>
    </citation>
    <scope>NUCLEOTIDE SEQUENCE [LARGE SCALE GENOMIC DNA]</scope>
    <source>
        <strain>L550</strain>
    </source>
</reference>
<proteinExistence type="inferred from homology"/>
<accession>Q055Y6</accession>
<sequence length="344" mass="37096">MNPNELIVKLQSKIDLKTKPPGSLGTLESLALQIGLIQNTDSPELKSPHILVFAGDHGLANSGVSAYPKEVTYQMVFNFLNGGAAINAFCKQNSIRLKVVDAGVDFSFSDDSTFLHPDFIDAKVGFGTKNILIESAMTKEECNQALEKGAFISTKKVSSNCNVIGFGEMGIGNTSSASLITASVLKKDLREVTGKGTGLNDQKFQKKITILEECLCKHQSSLRTPFEVLQTFGGFEIAMMIGAMIDSAKKGRIILVDGFIATSAFLIAHKMEPTILKNAVFCHKSVEPGHIHLLEEWNAKPLLDLGLRLGEGAGCAIAFPILLSAIAFLNDMASFESAKVDQKL</sequence>
<gene>
    <name evidence="1" type="primary">cobT</name>
    <name type="ordered locus">LBL_0245</name>
</gene>
<dbReference type="EC" id="2.4.2.21" evidence="1"/>
<dbReference type="EMBL" id="CP000348">
    <property type="protein sequence ID" value="ABJ77859.1"/>
    <property type="molecule type" value="Genomic_DNA"/>
</dbReference>
<dbReference type="RefSeq" id="WP_011669303.1">
    <property type="nucleotide sequence ID" value="NC_008508.1"/>
</dbReference>
<dbReference type="SMR" id="Q055Y6"/>
<dbReference type="KEGG" id="lbl:LBL_0245"/>
<dbReference type="HOGENOM" id="CLU_002982_0_0_12"/>
<dbReference type="UniPathway" id="UPA00061">
    <property type="reaction ID" value="UER00516"/>
</dbReference>
<dbReference type="GO" id="GO:0008939">
    <property type="term" value="F:nicotinate-nucleotide-dimethylbenzimidazole phosphoribosyltransferase activity"/>
    <property type="evidence" value="ECO:0007669"/>
    <property type="project" value="UniProtKB-UniRule"/>
</dbReference>
<dbReference type="GO" id="GO:0009236">
    <property type="term" value="P:cobalamin biosynthetic process"/>
    <property type="evidence" value="ECO:0007669"/>
    <property type="project" value="UniProtKB-KW"/>
</dbReference>
<dbReference type="CDD" id="cd02439">
    <property type="entry name" value="DMB-PRT_CobT"/>
    <property type="match status" value="1"/>
</dbReference>
<dbReference type="FunFam" id="3.40.50.10210:FF:000001">
    <property type="entry name" value="Nicotinate-nucleotide--dimethylbenzimidazole phosphoribosyltransferase"/>
    <property type="match status" value="1"/>
</dbReference>
<dbReference type="Gene3D" id="1.10.1610.10">
    <property type="match status" value="1"/>
</dbReference>
<dbReference type="Gene3D" id="3.40.50.10210">
    <property type="match status" value="1"/>
</dbReference>
<dbReference type="HAMAP" id="MF_00230">
    <property type="entry name" value="CobT"/>
    <property type="match status" value="1"/>
</dbReference>
<dbReference type="InterPro" id="IPR003200">
    <property type="entry name" value="Nict_dMeBzImd_PRibTrfase"/>
</dbReference>
<dbReference type="InterPro" id="IPR017846">
    <property type="entry name" value="Nict_dMeBzImd_PRibTrfase_bact"/>
</dbReference>
<dbReference type="InterPro" id="IPR023195">
    <property type="entry name" value="Nict_dMeBzImd_PRibTrfase_N"/>
</dbReference>
<dbReference type="InterPro" id="IPR036087">
    <property type="entry name" value="Nict_dMeBzImd_PRibTrfase_sf"/>
</dbReference>
<dbReference type="NCBIfam" id="TIGR03160">
    <property type="entry name" value="cobT_DBIPRT"/>
    <property type="match status" value="1"/>
</dbReference>
<dbReference type="NCBIfam" id="NF000996">
    <property type="entry name" value="PRK00105.1"/>
    <property type="match status" value="1"/>
</dbReference>
<dbReference type="PANTHER" id="PTHR43463">
    <property type="entry name" value="NICOTINATE-NUCLEOTIDE--DIMETHYLBENZIMIDAZOLE PHOSPHORIBOSYLTRANSFERASE"/>
    <property type="match status" value="1"/>
</dbReference>
<dbReference type="PANTHER" id="PTHR43463:SF1">
    <property type="entry name" value="NICOTINATE-NUCLEOTIDE--DIMETHYLBENZIMIDAZOLE PHOSPHORIBOSYLTRANSFERASE"/>
    <property type="match status" value="1"/>
</dbReference>
<dbReference type="Pfam" id="PF02277">
    <property type="entry name" value="DBI_PRT"/>
    <property type="match status" value="1"/>
</dbReference>
<dbReference type="SUPFAM" id="SSF52733">
    <property type="entry name" value="Nicotinate mononucleotide:5,6-dimethylbenzimidazole phosphoribosyltransferase (CobT)"/>
    <property type="match status" value="1"/>
</dbReference>
<evidence type="ECO:0000255" key="1">
    <source>
        <dbReference type="HAMAP-Rule" id="MF_00230"/>
    </source>
</evidence>
<feature type="chain" id="PRO_1000021601" description="Nicotinate-nucleotide--dimethylbenzimidazole phosphoribosyltransferase">
    <location>
        <begin position="1"/>
        <end position="344"/>
    </location>
</feature>
<feature type="active site" description="Proton acceptor" evidence="1">
    <location>
        <position position="311"/>
    </location>
</feature>
<organism>
    <name type="scientific">Leptospira borgpetersenii serovar Hardjo-bovis (strain L550)</name>
    <dbReference type="NCBI Taxonomy" id="355276"/>
    <lineage>
        <taxon>Bacteria</taxon>
        <taxon>Pseudomonadati</taxon>
        <taxon>Spirochaetota</taxon>
        <taxon>Spirochaetia</taxon>
        <taxon>Leptospirales</taxon>
        <taxon>Leptospiraceae</taxon>
        <taxon>Leptospira</taxon>
    </lineage>
</organism>
<comment type="function">
    <text evidence="1">Catalyzes the synthesis of alpha-ribazole-5'-phosphate from nicotinate mononucleotide (NAMN) and 5,6-dimethylbenzimidazole (DMB).</text>
</comment>
<comment type="catalytic activity">
    <reaction evidence="1">
        <text>5,6-dimethylbenzimidazole + nicotinate beta-D-ribonucleotide = alpha-ribazole 5'-phosphate + nicotinate + H(+)</text>
        <dbReference type="Rhea" id="RHEA:11196"/>
        <dbReference type="ChEBI" id="CHEBI:15378"/>
        <dbReference type="ChEBI" id="CHEBI:15890"/>
        <dbReference type="ChEBI" id="CHEBI:32544"/>
        <dbReference type="ChEBI" id="CHEBI:57502"/>
        <dbReference type="ChEBI" id="CHEBI:57918"/>
        <dbReference type="EC" id="2.4.2.21"/>
    </reaction>
</comment>
<comment type="pathway">
    <text evidence="1">Nucleoside biosynthesis; alpha-ribazole biosynthesis; alpha-ribazole from 5,6-dimethylbenzimidazole: step 1/2.</text>
</comment>
<comment type="similarity">
    <text evidence="1">Belongs to the CobT family.</text>
</comment>
<name>COBT_LEPBL</name>
<protein>
    <recommendedName>
        <fullName evidence="1">Nicotinate-nucleotide--dimethylbenzimidazole phosphoribosyltransferase</fullName>
        <shortName evidence="1">NN:DBI PRT</shortName>
        <ecNumber evidence="1">2.4.2.21</ecNumber>
    </recommendedName>
    <alternativeName>
        <fullName evidence="1">N(1)-alpha-phosphoribosyltransferase</fullName>
    </alternativeName>
</protein>
<keyword id="KW-0169">Cobalamin biosynthesis</keyword>
<keyword id="KW-0328">Glycosyltransferase</keyword>
<keyword id="KW-0808">Transferase</keyword>